<gene>
    <name type="primary">metK1</name>
    <name type="ordered locus">SPy_0538</name>
    <name type="ordered locus">M5005_Spy0445</name>
</gene>
<name>Y538_STRP1</name>
<reference key="1">
    <citation type="journal article" date="2001" name="Proc. Natl. Acad. Sci. U.S.A.">
        <title>Complete genome sequence of an M1 strain of Streptococcus pyogenes.</title>
        <authorList>
            <person name="Ferretti J.J."/>
            <person name="McShan W.M."/>
            <person name="Ajdic D.J."/>
            <person name="Savic D.J."/>
            <person name="Savic G."/>
            <person name="Lyon K."/>
            <person name="Primeaux C."/>
            <person name="Sezate S."/>
            <person name="Suvorov A.N."/>
            <person name="Kenton S."/>
            <person name="Lai H.S."/>
            <person name="Lin S.P."/>
            <person name="Qian Y."/>
            <person name="Jia H.G."/>
            <person name="Najar F.Z."/>
            <person name="Ren Q."/>
            <person name="Zhu H."/>
            <person name="Song L."/>
            <person name="White J."/>
            <person name="Yuan X."/>
            <person name="Clifton S.W."/>
            <person name="Roe B.A."/>
            <person name="McLaughlin R.E."/>
        </authorList>
    </citation>
    <scope>NUCLEOTIDE SEQUENCE [LARGE SCALE GENOMIC DNA]</scope>
    <source>
        <strain>ATCC 700294 / SF370 / Serotype M1</strain>
    </source>
</reference>
<reference key="2">
    <citation type="journal article" date="2005" name="J. Infect. Dis.">
        <title>Evolutionary origin and emergence of a highly successful clone of serotype M1 group A Streptococcus involved multiple horizontal gene transfer events.</title>
        <authorList>
            <person name="Sumby P."/>
            <person name="Porcella S.F."/>
            <person name="Madrigal A.G."/>
            <person name="Barbian K.D."/>
            <person name="Virtaneva K."/>
            <person name="Ricklefs S.M."/>
            <person name="Sturdevant D.E."/>
            <person name="Graham M.R."/>
            <person name="Vuopio-Varkila J."/>
            <person name="Hoe N.P."/>
            <person name="Musser J.M."/>
        </authorList>
    </citation>
    <scope>NUCLEOTIDE SEQUENCE [LARGE SCALE GENOMIC DNA]</scope>
    <source>
        <strain>ATCC BAA-947 / MGAS5005 / Serotype M1</strain>
    </source>
</reference>
<keyword id="KW-1185">Reference proteome</keyword>
<proteinExistence type="inferred from homology"/>
<sequence length="399" mass="45771">MDLKITNGFYDPSHLSYEVVERKGLGHPDTLADGIAEQIEIDYSLYCLDKFGVIPHHNFDKIIIRGGHSVQDFGGSDFIEPIKIIFLGRASKKCFNSSIPLFKIQKKAATKYLNRILPNLDVENYVEFETLTSDFTTKTNWFSPEAIEDLPEYLDVPKANDTATMISYWPLTISEELALMIEGYFYKLDKNELPTPRFTKMGGDIKVMVVRNDLEYSIRINFPLISKFFNNDIESQLYVDKHVEKIKKYIEQKYKNISFSIDYHYYLTTTGSCIDFGEEGAVGRGNKTHGIISSFRPNTMEAPAGKNCTYFVGKVWGFLSDTIAKEIYEAFNTPCQIIMQLNIGSKLYRPTHLFIQTEESVDQERVLEIVNRHLNNGKQNTNLILSTQHFIPKTNVYDG</sequence>
<organism>
    <name type="scientific">Streptococcus pyogenes serotype M1</name>
    <dbReference type="NCBI Taxonomy" id="301447"/>
    <lineage>
        <taxon>Bacteria</taxon>
        <taxon>Bacillati</taxon>
        <taxon>Bacillota</taxon>
        <taxon>Bacilli</taxon>
        <taxon>Lactobacillales</taxon>
        <taxon>Streptococcaceae</taxon>
        <taxon>Streptococcus</taxon>
    </lineage>
</organism>
<dbReference type="EMBL" id="AE004092">
    <property type="protein sequence ID" value="AAK33533.1"/>
    <property type="molecule type" value="Genomic_DNA"/>
</dbReference>
<dbReference type="EMBL" id="CP000017">
    <property type="protein sequence ID" value="AAZ51063.1"/>
    <property type="molecule type" value="Genomic_DNA"/>
</dbReference>
<dbReference type="RefSeq" id="NP_268812.1">
    <property type="nucleotide sequence ID" value="NC_002737.2"/>
</dbReference>
<dbReference type="SMR" id="P66768"/>
<dbReference type="PaxDb" id="1314-HKU360_00468"/>
<dbReference type="KEGG" id="spy:SPy_0538"/>
<dbReference type="KEGG" id="spz:M5005_Spy0445"/>
<dbReference type="PATRIC" id="fig|160490.10.peg.460"/>
<dbReference type="HOGENOM" id="CLU_057642_0_0_9"/>
<dbReference type="OMA" id="IGHPDSI"/>
<dbReference type="Proteomes" id="UP000000750">
    <property type="component" value="Chromosome"/>
</dbReference>
<dbReference type="Gene3D" id="3.30.300.10">
    <property type="match status" value="1"/>
</dbReference>
<dbReference type="Gene3D" id="3.30.300.280">
    <property type="entry name" value="S-adenosylmethionine synthetase, C-terminal domain"/>
    <property type="match status" value="1"/>
</dbReference>
<dbReference type="Gene3D" id="3.30.300.340">
    <property type="entry name" value="S-adenosylmethionine synthetase, N-terminal domain"/>
    <property type="match status" value="1"/>
</dbReference>
<dbReference type="InterPro" id="IPR042543">
    <property type="entry name" value="AdoMet_synthase_2"/>
</dbReference>
<dbReference type="InterPro" id="IPR027790">
    <property type="entry name" value="AdoMet_synthase_2_family"/>
</dbReference>
<dbReference type="InterPro" id="IPR042544">
    <property type="entry name" value="AdoMet_synthase_3"/>
</dbReference>
<dbReference type="NCBIfam" id="NF003362">
    <property type="entry name" value="PRK04439.1-1"/>
    <property type="match status" value="1"/>
</dbReference>
<dbReference type="PANTHER" id="PTHR36697">
    <property type="entry name" value="S-ADENOSYLMETHIONINE SYNTHASE"/>
    <property type="match status" value="1"/>
</dbReference>
<dbReference type="PANTHER" id="PTHR36697:SF1">
    <property type="entry name" value="S-ADENOSYLMETHIONINE SYNTHASE"/>
    <property type="match status" value="1"/>
</dbReference>
<dbReference type="Pfam" id="PF01941">
    <property type="entry name" value="AdoMet_Synthase"/>
    <property type="match status" value="1"/>
</dbReference>
<feature type="chain" id="PRO_0000150046" description="Uncharacterized protein SPy_0538/M5005_Spy0445">
    <location>
        <begin position="1"/>
        <end position="399"/>
    </location>
</feature>
<evidence type="ECO:0000305" key="1"/>
<protein>
    <recommendedName>
        <fullName>Uncharacterized protein SPy_0538/M5005_Spy0445</fullName>
    </recommendedName>
</protein>
<comment type="similarity">
    <text evidence="1">Belongs to the AdoMet synthetase 2 family.</text>
</comment>
<accession>P66768</accession>
<accession>Q490A5</accession>
<accession>Q9A0Z8</accession>